<name>YH52B_YEAST</name>
<evidence type="ECO:0000305" key="1"/>
<evidence type="ECO:0000312" key="2">
    <source>
        <dbReference type="SGD" id="S000303807"/>
    </source>
</evidence>
<proteinExistence type="evidence at protein level"/>
<gene>
    <name evidence="2" type="ordered locus">YHR052C-B</name>
</gene>
<accession>P9WEN8</accession>
<accession>A0A8D9PCQ1</accession>
<dbReference type="EMBL" id="BK006934">
    <property type="protein sequence ID" value="DAD54801.1"/>
    <property type="molecule type" value="Genomic_DNA"/>
</dbReference>
<dbReference type="RefSeq" id="NP_001381960.1">
    <property type="nucleotide sequence ID" value="NM_001395031.1"/>
</dbReference>
<dbReference type="GeneID" id="65052908"/>
<dbReference type="SGD" id="S000303807">
    <property type="gene designation" value="YHR052C-B"/>
</dbReference>
<dbReference type="PRO" id="PR:P9WEN8"/>
<dbReference type="Proteomes" id="UP000002311">
    <property type="component" value="Chromosome VIII"/>
</dbReference>
<dbReference type="Pfam" id="PF23530">
    <property type="entry name" value="YHR052C-B"/>
    <property type="match status" value="1"/>
</dbReference>
<sequence length="57" mass="5872">MKVMSANANVVAAKIMNNAKNHVAAQRGVTATTNAPAVTSLKKPRSHAALGNETNSL</sequence>
<protein>
    <recommendedName>
        <fullName evidence="1">Uncharacterized protein YHR052C-B</fullName>
    </recommendedName>
</protein>
<feature type="chain" id="PRO_0000455989" description="Uncharacterized protein YHR052C-B">
    <location>
        <begin position="1"/>
        <end position="57"/>
    </location>
</feature>
<reference key="1">
    <citation type="journal article" date="1994" name="Science">
        <title>Complete nucleotide sequence of Saccharomyces cerevisiae chromosome VIII.</title>
        <authorList>
            <person name="Johnston M."/>
            <person name="Andrews S."/>
            <person name="Brinkman R."/>
            <person name="Cooper J."/>
            <person name="Ding H."/>
            <person name="Dover J."/>
            <person name="Du Z."/>
            <person name="Favello A."/>
            <person name="Fulton L."/>
            <person name="Gattung S."/>
            <person name="Geisel C."/>
            <person name="Kirsten J."/>
            <person name="Kucaba T."/>
            <person name="Hillier L.W."/>
            <person name="Jier M."/>
            <person name="Johnston L."/>
            <person name="Langston Y."/>
            <person name="Latreille P."/>
            <person name="Louis E.J."/>
            <person name="Macri C."/>
            <person name="Mardis E."/>
            <person name="Menezes S."/>
            <person name="Mouser L."/>
            <person name="Nhan M."/>
            <person name="Rifkin L."/>
            <person name="Riles L."/>
            <person name="St Peter H."/>
            <person name="Trevaskis E."/>
            <person name="Vaughan K."/>
            <person name="Vignati D."/>
            <person name="Wilcox L."/>
            <person name="Wohldman P."/>
            <person name="Waterston R."/>
            <person name="Wilson R."/>
            <person name="Vaudin M."/>
        </authorList>
    </citation>
    <scope>NUCLEOTIDE SEQUENCE [LARGE SCALE GENOMIC DNA]</scope>
    <source>
        <strain>ATCC 204508 / S288c</strain>
    </source>
</reference>
<reference key="2">
    <citation type="journal article" date="2014" name="G3 (Bethesda)">
        <title>The reference genome sequence of Saccharomyces cerevisiae: Then and now.</title>
        <authorList>
            <person name="Engel S.R."/>
            <person name="Dietrich F.S."/>
            <person name="Fisk D.G."/>
            <person name="Binkley G."/>
            <person name="Balakrishnan R."/>
            <person name="Costanzo M.C."/>
            <person name="Dwight S.S."/>
            <person name="Hitz B.C."/>
            <person name="Karra K."/>
            <person name="Nash R.S."/>
            <person name="Weng S."/>
            <person name="Wong E.D."/>
            <person name="Lloyd P."/>
            <person name="Skrzypek M.S."/>
            <person name="Miyasato S.R."/>
            <person name="Simison M."/>
            <person name="Cherry J.M."/>
        </authorList>
    </citation>
    <scope>GENOME REANNOTATION</scope>
    <source>
        <strain>ATCC 204508 / S288c</strain>
    </source>
</reference>
<reference key="3">
    <citation type="journal article" date="2018" name="J. Proteome Res.">
        <title>Enrichment-based proteogenomics identifies microproteins, missing proteins, and novel smORFs in Saccharomyces cerevisiae.</title>
        <authorList>
            <person name="He C."/>
            <person name="Jia C."/>
            <person name="Zhang Y."/>
            <person name="Xu P."/>
        </authorList>
    </citation>
    <scope>IDENTIFICATION BY MASS SPECTROMETRY</scope>
</reference>
<keyword id="KW-1185">Reference proteome</keyword>
<organism>
    <name type="scientific">Saccharomyces cerevisiae (strain ATCC 204508 / S288c)</name>
    <name type="common">Baker's yeast</name>
    <dbReference type="NCBI Taxonomy" id="559292"/>
    <lineage>
        <taxon>Eukaryota</taxon>
        <taxon>Fungi</taxon>
        <taxon>Dikarya</taxon>
        <taxon>Ascomycota</taxon>
        <taxon>Saccharomycotina</taxon>
        <taxon>Saccharomycetes</taxon>
        <taxon>Saccharomycetales</taxon>
        <taxon>Saccharomycetaceae</taxon>
        <taxon>Saccharomyces</taxon>
    </lineage>
</organism>